<keyword id="KW-0007">Acetylation</keyword>
<keyword id="KW-0276">Fatty acid metabolism</keyword>
<keyword id="KW-0413">Isomerase</keyword>
<keyword id="KW-0443">Lipid metabolism</keyword>
<keyword id="KW-0456">Lyase</keyword>
<keyword id="KW-0511">Multifunctional enzyme</keyword>
<keyword id="KW-0520">NAD</keyword>
<keyword id="KW-0560">Oxidoreductase</keyword>
<keyword id="KW-0576">Peroxisome</keyword>
<keyword id="KW-0597">Phosphoprotein</keyword>
<keyword id="KW-1185">Reference proteome</keyword>
<sequence length="718" mass="78301">MAEYLRLPHSLAMIRLCNPPVNAISPTVITEVRNGLQKASLDHTVRAIVICGANDNFCAGADIHGFKSPTGLTLGSLVDEIQRYQKPVVAAIQGVALGGGLELALGCHYRIANAKARVGFPEVMLGILPGARGTQLLPRVVGVPVALDLITSGRHISTDEALKLGILDVVVKSDPVEEAIKFAQTVIGKPIEPRRILNKPVPSLPNMDSVFAEAIAKVRKQYPGRLAPETCVRSVQASVKHPYEVAIKEEAKLFMYLRGSGQARALQYAFFAEKSANKWSTPSGASWKTASAQPVSSVGVLGLGTMGRGIAISFARVGIPVVAVESDPKQLDTAKKIITSTLEKEASKSGQASAKPNLRFSSSTKELSSVDLVIEAVFEDMNLKKKVFAELSALCKPGAFLCTNTSALDVDDIASSTDRPQLVIGTHFFSPAHIMRLLEVIPSRYSSPTTIATVMSLSKRIGKIGVVVGNCYGFVGNRMLAPYYNQGYFLIEEGSKPEDVDGVLEEFGFRMGPFRVSDLAGLDVGWKVRKGQGLTGPSLPPGTPTRKRGNTRYSPIADMLCEAGRFGQKTGKGWYQYDKPLGRIHKPDPWLSEFLSQYRETHHIKQRSISKEEILERCLYSLINEAFRILEEGMAASPEHIDVIYLHGYGWPRHVGGPMYYAASVGLPTVLEKLQKYYRQNPDIPQLEPSDYLRRLVAQGSPPLKEWQSLAGPHSSKL</sequence>
<dbReference type="EC" id="4.2.1.17" evidence="4 5"/>
<dbReference type="EC" id="5.3.3.8"/>
<dbReference type="EC" id="1.1.1.35" evidence="4 5"/>
<dbReference type="EMBL" id="AK004867">
    <property type="protein sequence ID" value="BAB23628.1"/>
    <property type="molecule type" value="mRNA"/>
</dbReference>
<dbReference type="EMBL" id="BC016899">
    <property type="protein sequence ID" value="AAH16899.1"/>
    <property type="molecule type" value="mRNA"/>
</dbReference>
<dbReference type="EMBL" id="CH466521">
    <property type="protein sequence ID" value="EDK97607.1"/>
    <property type="molecule type" value="Genomic_DNA"/>
</dbReference>
<dbReference type="CCDS" id="CCDS28063.1"/>
<dbReference type="RefSeq" id="NP_076226.2">
    <property type="nucleotide sequence ID" value="NM_023737.3"/>
</dbReference>
<dbReference type="SMR" id="Q9DBM2"/>
<dbReference type="BioGRID" id="216525">
    <property type="interactions" value="18"/>
</dbReference>
<dbReference type="FunCoup" id="Q9DBM2">
    <property type="interactions" value="1512"/>
</dbReference>
<dbReference type="IntAct" id="Q9DBM2">
    <property type="interactions" value="1"/>
</dbReference>
<dbReference type="MINT" id="Q9DBM2"/>
<dbReference type="STRING" id="10090.ENSMUSP00000023559"/>
<dbReference type="SwissLipids" id="SLP:000000402"/>
<dbReference type="SwissLipids" id="SLP:000000491"/>
<dbReference type="GlyGen" id="Q9DBM2">
    <property type="glycosylation" value="1 site, 1 O-linked glycan (1 site)"/>
</dbReference>
<dbReference type="iPTMnet" id="Q9DBM2"/>
<dbReference type="PhosphoSitePlus" id="Q9DBM2"/>
<dbReference type="SwissPalm" id="Q9DBM2"/>
<dbReference type="jPOST" id="Q9DBM2"/>
<dbReference type="PaxDb" id="10090-ENSMUSP00000023559"/>
<dbReference type="PeptideAtlas" id="Q9DBM2"/>
<dbReference type="ProteomicsDB" id="277754"/>
<dbReference type="Antibodypedia" id="33832">
    <property type="antibodies" value="333 antibodies from 31 providers"/>
</dbReference>
<dbReference type="DNASU" id="74147"/>
<dbReference type="Ensembl" id="ENSMUST00000023559.7">
    <property type="protein sequence ID" value="ENSMUSP00000023559.6"/>
    <property type="gene ID" value="ENSMUSG00000022853.8"/>
</dbReference>
<dbReference type="GeneID" id="74147"/>
<dbReference type="KEGG" id="mmu:74147"/>
<dbReference type="UCSC" id="uc007yrm.2">
    <property type="organism name" value="mouse"/>
</dbReference>
<dbReference type="AGR" id="MGI:1277964"/>
<dbReference type="CTD" id="1962"/>
<dbReference type="MGI" id="MGI:1277964">
    <property type="gene designation" value="Ehhadh"/>
</dbReference>
<dbReference type="VEuPathDB" id="HostDB:ENSMUSG00000022853"/>
<dbReference type="eggNOG" id="KOG1683">
    <property type="taxonomic scope" value="Eukaryota"/>
</dbReference>
<dbReference type="GeneTree" id="ENSGT00940000157516"/>
<dbReference type="HOGENOM" id="CLU_009834_16_3_1"/>
<dbReference type="InParanoid" id="Q9DBM2"/>
<dbReference type="OMA" id="YNGAAMG"/>
<dbReference type="OrthoDB" id="2018133at2759"/>
<dbReference type="PhylomeDB" id="Q9DBM2"/>
<dbReference type="TreeFam" id="TF316708"/>
<dbReference type="Reactome" id="R-MMU-390247">
    <property type="pathway name" value="Beta-oxidation of very long chain fatty acids"/>
</dbReference>
<dbReference type="Reactome" id="R-MMU-9033241">
    <property type="pathway name" value="Peroxisomal protein import"/>
</dbReference>
<dbReference type="UniPathway" id="UPA00659"/>
<dbReference type="BioGRID-ORCS" id="74147">
    <property type="hits" value="3 hits in 79 CRISPR screens"/>
</dbReference>
<dbReference type="PRO" id="PR:Q9DBM2"/>
<dbReference type="Proteomes" id="UP000000589">
    <property type="component" value="Chromosome 16"/>
</dbReference>
<dbReference type="RNAct" id="Q9DBM2">
    <property type="molecule type" value="protein"/>
</dbReference>
<dbReference type="Bgee" id="ENSMUSG00000022853">
    <property type="expression patterns" value="Expressed in right kidney and 196 other cell types or tissues"/>
</dbReference>
<dbReference type="GO" id="GO:0005829">
    <property type="term" value="C:cytosol"/>
    <property type="evidence" value="ECO:0007669"/>
    <property type="project" value="Ensembl"/>
</dbReference>
<dbReference type="GO" id="GO:0005739">
    <property type="term" value="C:mitochondrion"/>
    <property type="evidence" value="ECO:0007005"/>
    <property type="project" value="MGI"/>
</dbReference>
<dbReference type="GO" id="GO:0005782">
    <property type="term" value="C:peroxisomal matrix"/>
    <property type="evidence" value="ECO:0000314"/>
    <property type="project" value="MGI"/>
</dbReference>
<dbReference type="GO" id="GO:0005777">
    <property type="term" value="C:peroxisome"/>
    <property type="evidence" value="ECO:0000250"/>
    <property type="project" value="UniProtKB"/>
</dbReference>
<dbReference type="GO" id="GO:0018812">
    <property type="term" value="F:3-hydroxyacyl-CoA dehydratase activity"/>
    <property type="evidence" value="ECO:0000315"/>
    <property type="project" value="MGI"/>
</dbReference>
<dbReference type="GO" id="GO:0003857">
    <property type="term" value="F:3-hydroxyacyl-CoA dehydrogenase activity"/>
    <property type="evidence" value="ECO:0000315"/>
    <property type="project" value="MGI"/>
</dbReference>
<dbReference type="GO" id="GO:0004165">
    <property type="term" value="F:delta(3)-delta(2)-enoyl-CoA isomerase activity"/>
    <property type="evidence" value="ECO:0000250"/>
    <property type="project" value="UniProtKB"/>
</dbReference>
<dbReference type="GO" id="GO:0004300">
    <property type="term" value="F:enoyl-CoA hydratase activity"/>
    <property type="evidence" value="ECO:0000250"/>
    <property type="project" value="UniProtKB"/>
</dbReference>
<dbReference type="GO" id="GO:0019899">
    <property type="term" value="F:enzyme binding"/>
    <property type="evidence" value="ECO:0007669"/>
    <property type="project" value="Ensembl"/>
</dbReference>
<dbReference type="GO" id="GO:0016863">
    <property type="term" value="F:intramolecular oxidoreductase activity, transposing C=C bonds"/>
    <property type="evidence" value="ECO:0000250"/>
    <property type="project" value="UniProtKB"/>
</dbReference>
<dbReference type="GO" id="GO:0016509">
    <property type="term" value="F:long-chain-3-hydroxyacyl-CoA dehydrogenase activity"/>
    <property type="evidence" value="ECO:0000250"/>
    <property type="project" value="UniProtKB"/>
</dbReference>
<dbReference type="GO" id="GO:0070403">
    <property type="term" value="F:NAD+ binding"/>
    <property type="evidence" value="ECO:0007669"/>
    <property type="project" value="InterPro"/>
</dbReference>
<dbReference type="GO" id="GO:0006637">
    <property type="term" value="P:acyl-CoA metabolic process"/>
    <property type="evidence" value="ECO:0000304"/>
    <property type="project" value="MGI"/>
</dbReference>
<dbReference type="GO" id="GO:0036109">
    <property type="term" value="P:alpha-linolenic acid metabolic process"/>
    <property type="evidence" value="ECO:0000315"/>
    <property type="project" value="MGI"/>
</dbReference>
<dbReference type="GO" id="GO:0006635">
    <property type="term" value="P:fatty acid beta-oxidation"/>
    <property type="evidence" value="ECO:0000315"/>
    <property type="project" value="MGI"/>
</dbReference>
<dbReference type="GO" id="GO:0033540">
    <property type="term" value="P:fatty acid beta-oxidation using acyl-CoA oxidase"/>
    <property type="evidence" value="ECO:0000315"/>
    <property type="project" value="MGI"/>
</dbReference>
<dbReference type="GO" id="GO:1901570">
    <property type="term" value="P:fatty acid derivative biosynthetic process"/>
    <property type="evidence" value="ECO:0000315"/>
    <property type="project" value="MGI"/>
</dbReference>
<dbReference type="GO" id="GO:0042759">
    <property type="term" value="P:long-chain fatty acid biosynthetic process"/>
    <property type="evidence" value="ECO:0000315"/>
    <property type="project" value="MGI"/>
</dbReference>
<dbReference type="GO" id="GO:0006636">
    <property type="term" value="P:unsaturated fatty acid biosynthetic process"/>
    <property type="evidence" value="ECO:0000315"/>
    <property type="project" value="MGI"/>
</dbReference>
<dbReference type="CDD" id="cd06558">
    <property type="entry name" value="crotonase-like"/>
    <property type="match status" value="1"/>
</dbReference>
<dbReference type="FunFam" id="1.10.1040.50:FF:000006">
    <property type="entry name" value="Peroxisomal bifunctional enzyme"/>
    <property type="match status" value="1"/>
</dbReference>
<dbReference type="FunFam" id="3.90.226.10:FF:000052">
    <property type="entry name" value="Peroxisomal bifunctional enzyme"/>
    <property type="match status" value="1"/>
</dbReference>
<dbReference type="FunFam" id="3.40.50.720:FF:000296">
    <property type="entry name" value="peroxisomal bifunctional enzyme isoform X1"/>
    <property type="match status" value="1"/>
</dbReference>
<dbReference type="Gene3D" id="1.10.1040.50">
    <property type="match status" value="1"/>
</dbReference>
<dbReference type="Gene3D" id="3.90.226.10">
    <property type="entry name" value="2-enoyl-CoA Hydratase, Chain A, domain 1"/>
    <property type="match status" value="1"/>
</dbReference>
<dbReference type="Gene3D" id="3.40.50.720">
    <property type="entry name" value="NAD(P)-binding Rossmann-like Domain"/>
    <property type="match status" value="1"/>
</dbReference>
<dbReference type="InterPro" id="IPR006180">
    <property type="entry name" value="3-OHacyl-CoA_DH_CS"/>
</dbReference>
<dbReference type="InterPro" id="IPR006176">
    <property type="entry name" value="3-OHacyl-CoA_DH_NAD-bd"/>
</dbReference>
<dbReference type="InterPro" id="IPR006108">
    <property type="entry name" value="3HC_DH_C"/>
</dbReference>
<dbReference type="InterPro" id="IPR008927">
    <property type="entry name" value="6-PGluconate_DH-like_C_sf"/>
</dbReference>
<dbReference type="InterPro" id="IPR029045">
    <property type="entry name" value="ClpP/crotonase-like_dom_sf"/>
</dbReference>
<dbReference type="InterPro" id="IPR018376">
    <property type="entry name" value="Enoyl-CoA_hyd/isom_CS"/>
</dbReference>
<dbReference type="InterPro" id="IPR001753">
    <property type="entry name" value="Enoyl-CoA_hydra/iso"/>
</dbReference>
<dbReference type="InterPro" id="IPR036291">
    <property type="entry name" value="NAD(P)-bd_dom_sf"/>
</dbReference>
<dbReference type="PANTHER" id="PTHR23309">
    <property type="entry name" value="3-HYDROXYACYL-COA DEHYROGENASE"/>
    <property type="match status" value="1"/>
</dbReference>
<dbReference type="PANTHER" id="PTHR23309:SF49">
    <property type="entry name" value="PEROXISOMAL BIFUNCTIONAL ENZYME"/>
    <property type="match status" value="1"/>
</dbReference>
<dbReference type="Pfam" id="PF00725">
    <property type="entry name" value="3HCDH"/>
    <property type="match status" value="2"/>
</dbReference>
<dbReference type="Pfam" id="PF02737">
    <property type="entry name" value="3HCDH_N"/>
    <property type="match status" value="1"/>
</dbReference>
<dbReference type="Pfam" id="PF00378">
    <property type="entry name" value="ECH_1"/>
    <property type="match status" value="1"/>
</dbReference>
<dbReference type="SUPFAM" id="SSF48179">
    <property type="entry name" value="6-phosphogluconate dehydrogenase C-terminal domain-like"/>
    <property type="match status" value="2"/>
</dbReference>
<dbReference type="SUPFAM" id="SSF52096">
    <property type="entry name" value="ClpP/crotonase"/>
    <property type="match status" value="1"/>
</dbReference>
<dbReference type="SUPFAM" id="SSF51735">
    <property type="entry name" value="NAD(P)-binding Rossmann-fold domains"/>
    <property type="match status" value="1"/>
</dbReference>
<dbReference type="PROSITE" id="PS00067">
    <property type="entry name" value="3HCDH"/>
    <property type="match status" value="1"/>
</dbReference>
<dbReference type="PROSITE" id="PS00166">
    <property type="entry name" value="ENOYL_COA_HYDRATASE"/>
    <property type="match status" value="1"/>
</dbReference>
<proteinExistence type="evidence at protein level"/>
<comment type="function">
    <text evidence="2 3 4 5 9">Peroxisomal trifunctional enzyme possessing 2-enoyl-CoA hydratase, 3-hydroxyacyl-CoA dehydrogenase, and delta 3, delta 2-enoyl-CoA isomerase activities. Catalyzes two of the four reactions of the long chain fatty acids peroxisomal beta-oxidation pathway (PubMed:17442273, PubMed:24075987). Can also use branched-chain fatty acids such as 2-methyl-2E-butenoyl-CoA as a substrate, which is hydrated into (2S,3S)-3-hydroxy-2-methylbutanoyl-CoA (By similarity). Optimal isomerase for 2,5 double bonds into 3,5 form isomerization in a range of enoyl-CoA species. Also able to isomerize both 3-cis and 3-trans double bonds into the 2-trans form in a range of enoyl-CoA species (By similarity). With HSD17B4, catalyzes the hydration of trans-2-enoyl-CoA and the dehydrogenation of 3-hydroxyacyl-CoA, but with opposite chiral specificity (Probable). Regulates the amount of medium-chain dicarboxylic fatty acids which are essential regulators of all fatty acid oxidation pathways (PubMed:24075987). Also involved in the degradation of long-chain dicarboxylic acids through peroxisomal beta-oxidation (By similarity).</text>
</comment>
<comment type="catalytic activity">
    <reaction evidence="4 5">
        <text>a (3S)-3-hydroxyacyl-CoA = a (2E)-enoyl-CoA + H2O</text>
        <dbReference type="Rhea" id="RHEA:16105"/>
        <dbReference type="ChEBI" id="CHEBI:15377"/>
        <dbReference type="ChEBI" id="CHEBI:57318"/>
        <dbReference type="ChEBI" id="CHEBI:58856"/>
        <dbReference type="EC" id="4.2.1.17"/>
    </reaction>
    <physiologicalReaction direction="right-to-left" evidence="4 5">
        <dbReference type="Rhea" id="RHEA:16107"/>
    </physiologicalReaction>
</comment>
<comment type="catalytic activity">
    <reaction evidence="2">
        <text>a 4-saturated-(3S)-3-hydroxyacyl-CoA = a (3E)-enoyl-CoA + H2O</text>
        <dbReference type="Rhea" id="RHEA:20724"/>
        <dbReference type="ChEBI" id="CHEBI:15377"/>
        <dbReference type="ChEBI" id="CHEBI:58521"/>
        <dbReference type="ChEBI" id="CHEBI:137480"/>
        <dbReference type="EC" id="4.2.1.17"/>
    </reaction>
    <physiologicalReaction direction="left-to-right" evidence="2">
        <dbReference type="Rhea" id="RHEA:20725"/>
    </physiologicalReaction>
</comment>
<comment type="catalytic activity">
    <reaction evidence="2">
        <text>a (3Z)-enoyl-CoA = a 4-saturated (2E)-enoyl-CoA</text>
        <dbReference type="Rhea" id="RHEA:45900"/>
        <dbReference type="ChEBI" id="CHEBI:85097"/>
        <dbReference type="ChEBI" id="CHEBI:85489"/>
        <dbReference type="EC" id="5.3.3.8"/>
    </reaction>
    <physiologicalReaction direction="left-to-right" evidence="2">
        <dbReference type="Rhea" id="RHEA:45901"/>
    </physiologicalReaction>
</comment>
<comment type="catalytic activity">
    <reaction evidence="2">
        <text>a (3E)-enoyl-CoA = a 4-saturated (2E)-enoyl-CoA</text>
        <dbReference type="Rhea" id="RHEA:45228"/>
        <dbReference type="ChEBI" id="CHEBI:58521"/>
        <dbReference type="ChEBI" id="CHEBI:85097"/>
        <dbReference type="EC" id="5.3.3.8"/>
    </reaction>
    <physiologicalReaction direction="left-to-right" evidence="2">
        <dbReference type="Rhea" id="RHEA:45229"/>
    </physiologicalReaction>
</comment>
<comment type="catalytic activity">
    <reaction evidence="4 5">
        <text>a (3S)-3-hydroxyacyl-CoA + NAD(+) = a 3-oxoacyl-CoA + NADH + H(+)</text>
        <dbReference type="Rhea" id="RHEA:22432"/>
        <dbReference type="ChEBI" id="CHEBI:15378"/>
        <dbReference type="ChEBI" id="CHEBI:57318"/>
        <dbReference type="ChEBI" id="CHEBI:57540"/>
        <dbReference type="ChEBI" id="CHEBI:57945"/>
        <dbReference type="ChEBI" id="CHEBI:90726"/>
        <dbReference type="EC" id="1.1.1.35"/>
    </reaction>
    <physiologicalReaction direction="left-to-right" evidence="4 5">
        <dbReference type="Rhea" id="RHEA:22433"/>
    </physiologicalReaction>
</comment>
<comment type="catalytic activity">
    <reaction evidence="2">
        <text>(2S,3S)-3-hydroxy-2-methylbutanoyl-CoA = (2E)-2-methylbut-2-enoyl-CoA + H2O</text>
        <dbReference type="Rhea" id="RHEA:31119"/>
        <dbReference type="ChEBI" id="CHEBI:15377"/>
        <dbReference type="ChEBI" id="CHEBI:57312"/>
        <dbReference type="ChEBI" id="CHEBI:57337"/>
    </reaction>
    <physiologicalReaction direction="right-to-left" evidence="2">
        <dbReference type="Rhea" id="RHEA:31121"/>
    </physiologicalReaction>
</comment>
<comment type="catalytic activity">
    <reaction evidence="5">
        <text>(2E)-dodecenedioyl-CoA + H2O = (3S)-hydroxydodecanedioyl-CoA</text>
        <dbReference type="Rhea" id="RHEA:39075"/>
        <dbReference type="ChEBI" id="CHEBI:15377"/>
        <dbReference type="ChEBI" id="CHEBI:76340"/>
        <dbReference type="ChEBI" id="CHEBI:76342"/>
    </reaction>
    <physiologicalReaction direction="left-to-right" evidence="5">
        <dbReference type="Rhea" id="RHEA:39076"/>
    </physiologicalReaction>
</comment>
<comment type="catalytic activity">
    <reaction evidence="5">
        <text>(3S)-hydroxydodecanedioyl-CoA + NAD(+) = 3-oxododecanedioyl-CoA + NADH + H(+)</text>
        <dbReference type="Rhea" id="RHEA:39079"/>
        <dbReference type="ChEBI" id="CHEBI:15378"/>
        <dbReference type="ChEBI" id="CHEBI:57540"/>
        <dbReference type="ChEBI" id="CHEBI:57945"/>
        <dbReference type="ChEBI" id="CHEBI:76342"/>
        <dbReference type="ChEBI" id="CHEBI:76346"/>
    </reaction>
    <physiologicalReaction direction="left-to-right" evidence="5">
        <dbReference type="Rhea" id="RHEA:39080"/>
    </physiologicalReaction>
</comment>
<comment type="catalytic activity">
    <reaction evidence="4 5">
        <text>(2E)-octenedioyl-CoA + H2O = (3S)-hydroxyoctanedioyl-CoA</text>
        <dbReference type="Rhea" id="RHEA:22532"/>
        <dbReference type="ChEBI" id="CHEBI:15377"/>
        <dbReference type="ChEBI" id="CHEBI:76330"/>
        <dbReference type="ChEBI" id="CHEBI:76333"/>
    </reaction>
    <physiologicalReaction direction="left-to-right" evidence="4 5">
        <dbReference type="Rhea" id="RHEA:22533"/>
    </physiologicalReaction>
</comment>
<comment type="catalytic activity">
    <reaction evidence="4 5">
        <text>(3S)-hydroxyoctanedioyl-CoA + NAD(+) = 3-oxooctanedioyl-CoA + NADH + H(+)</text>
        <dbReference type="Rhea" id="RHEA:22848"/>
        <dbReference type="ChEBI" id="CHEBI:15378"/>
        <dbReference type="ChEBI" id="CHEBI:57540"/>
        <dbReference type="ChEBI" id="CHEBI:57945"/>
        <dbReference type="ChEBI" id="CHEBI:76333"/>
        <dbReference type="ChEBI" id="CHEBI:76335"/>
    </reaction>
    <physiologicalReaction direction="left-to-right" evidence="4 5">
        <dbReference type="Rhea" id="RHEA:22849"/>
    </physiologicalReaction>
</comment>
<comment type="catalytic activity">
    <reaction evidence="5">
        <text>(2E)-decenedioyl-CoA + H2O = (3S)-hydroxydecanedioyl-CoA</text>
        <dbReference type="Rhea" id="RHEA:39091"/>
        <dbReference type="ChEBI" id="CHEBI:15377"/>
        <dbReference type="ChEBI" id="CHEBI:76347"/>
        <dbReference type="ChEBI" id="CHEBI:76348"/>
    </reaction>
    <physiologicalReaction direction="left-to-right" evidence="5">
        <dbReference type="Rhea" id="RHEA:39092"/>
    </physiologicalReaction>
</comment>
<comment type="catalytic activity">
    <reaction evidence="5">
        <text>(3S)-hydroxydecanedioyl-CoA + NAD(+) = 3-oxodecanedioyl-CoA + NADH + H(+)</text>
        <dbReference type="Rhea" id="RHEA:39095"/>
        <dbReference type="ChEBI" id="CHEBI:15378"/>
        <dbReference type="ChEBI" id="CHEBI:57540"/>
        <dbReference type="ChEBI" id="CHEBI:57945"/>
        <dbReference type="ChEBI" id="CHEBI:76348"/>
        <dbReference type="ChEBI" id="CHEBI:76349"/>
    </reaction>
    <physiologicalReaction direction="left-to-right" evidence="5">
        <dbReference type="Rhea" id="RHEA:39096"/>
    </physiologicalReaction>
</comment>
<comment type="catalytic activity">
    <reaction evidence="4">
        <text>(2E)-tetradecenedioyl-CoA + H2O = (3S)-hydroxytetradecanedioyl-CoA</text>
        <dbReference type="Rhea" id="RHEA:40207"/>
        <dbReference type="ChEBI" id="CHEBI:15377"/>
        <dbReference type="ChEBI" id="CHEBI:77038"/>
        <dbReference type="ChEBI" id="CHEBI:77039"/>
    </reaction>
    <physiologicalReaction direction="left-to-right" evidence="4">
        <dbReference type="Rhea" id="RHEA:40208"/>
    </physiologicalReaction>
</comment>
<comment type="catalytic activity">
    <reaction evidence="4">
        <text>(3S)-hydroxytetradecanedioyl-CoA + NAD(+) = 3-oxotetradecanedioyl-CoA + NADH + H(+)</text>
        <dbReference type="Rhea" id="RHEA:40211"/>
        <dbReference type="ChEBI" id="CHEBI:15378"/>
        <dbReference type="ChEBI" id="CHEBI:57540"/>
        <dbReference type="ChEBI" id="CHEBI:57945"/>
        <dbReference type="ChEBI" id="CHEBI:77038"/>
        <dbReference type="ChEBI" id="CHEBI:77041"/>
    </reaction>
    <physiologicalReaction direction="left-to-right" evidence="4">
        <dbReference type="Rhea" id="RHEA:40212"/>
    </physiologicalReaction>
</comment>
<comment type="catalytic activity">
    <reaction evidence="2">
        <text>(3E,5Z)-tetradecadienoyl-CoA = (2E,5Z)-tetradecadienoyl-CoA</text>
        <dbReference type="Rhea" id="RHEA:47464"/>
        <dbReference type="ChEBI" id="CHEBI:71586"/>
        <dbReference type="ChEBI" id="CHEBI:87701"/>
    </reaction>
    <physiologicalReaction direction="right-to-left" evidence="2">
        <dbReference type="Rhea" id="RHEA:47466"/>
    </physiologicalReaction>
</comment>
<comment type="catalytic activity">
    <reaction evidence="2">
        <text>(3E,5Z)-octadienoyl-CoA = (2E,5Z)-octadienoyl-CoA</text>
        <dbReference type="Rhea" id="RHEA:49932"/>
        <dbReference type="ChEBI" id="CHEBI:85108"/>
        <dbReference type="ChEBI" id="CHEBI:131990"/>
    </reaction>
    <physiologicalReaction direction="right-to-left" evidence="2">
        <dbReference type="Rhea" id="RHEA:49934"/>
    </physiologicalReaction>
</comment>
<comment type="catalytic activity">
    <reaction evidence="2">
        <text>(3S)-hydroxydecanoyl-CoA + NAD(+) = 3-oxodecanoyl-CoA + NADH + H(+)</text>
        <dbReference type="Rhea" id="RHEA:31187"/>
        <dbReference type="ChEBI" id="CHEBI:15378"/>
        <dbReference type="ChEBI" id="CHEBI:57540"/>
        <dbReference type="ChEBI" id="CHEBI:57945"/>
        <dbReference type="ChEBI" id="CHEBI:62548"/>
        <dbReference type="ChEBI" id="CHEBI:62616"/>
    </reaction>
    <physiologicalReaction direction="left-to-right" evidence="2">
        <dbReference type="Rhea" id="RHEA:31188"/>
    </physiologicalReaction>
</comment>
<comment type="catalytic activity">
    <reaction evidence="2">
        <text>(3E)-decenoyl-CoA = (2E)-decenoyl-CoA</text>
        <dbReference type="Rhea" id="RHEA:45752"/>
        <dbReference type="ChEBI" id="CHEBI:61406"/>
        <dbReference type="ChEBI" id="CHEBI:84793"/>
    </reaction>
    <physiologicalReaction direction="left-to-right" evidence="2">
        <dbReference type="Rhea" id="RHEA:45753"/>
    </physiologicalReaction>
</comment>
<comment type="catalytic activity">
    <reaction evidence="2">
        <text>(3Z)-hexenoyl-CoA = (2E)-hexenoyl-CoA</text>
        <dbReference type="Rhea" id="RHEA:45748"/>
        <dbReference type="ChEBI" id="CHEBI:62077"/>
        <dbReference type="ChEBI" id="CHEBI:85415"/>
    </reaction>
    <physiologicalReaction direction="left-to-right" evidence="2">
        <dbReference type="Rhea" id="RHEA:45749"/>
    </physiologicalReaction>
</comment>
<comment type="catalytic activity">
    <reaction evidence="2">
        <text>(3E)-hexenoyl-CoA = (2E)-hexenoyl-CoA</text>
        <dbReference type="Rhea" id="RHEA:45736"/>
        <dbReference type="ChEBI" id="CHEBI:62077"/>
        <dbReference type="ChEBI" id="CHEBI:84790"/>
    </reaction>
    <physiologicalReaction direction="left-to-right" evidence="2">
        <dbReference type="Rhea" id="RHEA:45737"/>
    </physiologicalReaction>
</comment>
<comment type="catalytic activity">
    <reaction evidence="2">
        <text>(3S)-hydroxydecanoyl-CoA = (2E)-decenoyl-CoA + H2O</text>
        <dbReference type="Rhea" id="RHEA:31191"/>
        <dbReference type="ChEBI" id="CHEBI:15377"/>
        <dbReference type="ChEBI" id="CHEBI:61406"/>
        <dbReference type="ChEBI" id="CHEBI:62616"/>
    </reaction>
    <physiologicalReaction direction="right-to-left" evidence="2">
        <dbReference type="Rhea" id="RHEA:31193"/>
    </physiologicalReaction>
</comment>
<comment type="catalytic activity">
    <reaction evidence="2">
        <text>(3S)-hydroxyhexanoyl-CoA = (2E)-hexenoyl-CoA + H2O</text>
        <dbReference type="Rhea" id="RHEA:30547"/>
        <dbReference type="ChEBI" id="CHEBI:15377"/>
        <dbReference type="ChEBI" id="CHEBI:62075"/>
        <dbReference type="ChEBI" id="CHEBI:62077"/>
    </reaction>
    <physiologicalReaction direction="right-to-left" evidence="2">
        <dbReference type="Rhea" id="RHEA:30549"/>
    </physiologicalReaction>
</comment>
<comment type="catalytic activity">
    <reaction evidence="3">
        <text>(3S)-hydroxyhexadecanoyl-CoA + NAD(+) = 3-oxohexadecanoyl-CoA + NADH + H(+)</text>
        <dbReference type="Rhea" id="RHEA:31159"/>
        <dbReference type="ChEBI" id="CHEBI:15378"/>
        <dbReference type="ChEBI" id="CHEBI:57349"/>
        <dbReference type="ChEBI" id="CHEBI:57540"/>
        <dbReference type="ChEBI" id="CHEBI:57945"/>
        <dbReference type="ChEBI" id="CHEBI:62613"/>
    </reaction>
    <physiologicalReaction direction="left-to-right" evidence="3">
        <dbReference type="Rhea" id="RHEA:31160"/>
    </physiologicalReaction>
</comment>
<comment type="catalytic activity">
    <reaction evidence="3">
        <text>(3S)-hydroxyhexadecanoyl-CoA = (2E)-hexadecenoyl-CoA + H2O</text>
        <dbReference type="Rhea" id="RHEA:31163"/>
        <dbReference type="ChEBI" id="CHEBI:15377"/>
        <dbReference type="ChEBI" id="CHEBI:61526"/>
        <dbReference type="ChEBI" id="CHEBI:62613"/>
    </reaction>
    <physiologicalReaction direction="right-to-left" evidence="3">
        <dbReference type="Rhea" id="RHEA:31165"/>
    </physiologicalReaction>
</comment>
<comment type="catalytic activity">
    <reaction evidence="3">
        <text>(2E)-hexadecenedioyl-CoA + H2O = (3S)-hydroxyhexadecanedioyl-CoA</text>
        <dbReference type="Rhea" id="RHEA:40259"/>
        <dbReference type="ChEBI" id="CHEBI:15377"/>
        <dbReference type="ChEBI" id="CHEBI:77075"/>
        <dbReference type="ChEBI" id="CHEBI:77080"/>
    </reaction>
    <physiologicalReaction direction="left-to-right" evidence="3">
        <dbReference type="Rhea" id="RHEA:40260"/>
    </physiologicalReaction>
</comment>
<comment type="catalytic activity">
    <reaction evidence="3">
        <text>(3S)-hydroxyhexadecanedioyl-CoA + NAD(+) = 3-oxohexadecanedioyl-CoA + NADH + H(+)</text>
        <dbReference type="Rhea" id="RHEA:40267"/>
        <dbReference type="ChEBI" id="CHEBI:15378"/>
        <dbReference type="ChEBI" id="CHEBI:57540"/>
        <dbReference type="ChEBI" id="CHEBI:57945"/>
        <dbReference type="ChEBI" id="CHEBI:77080"/>
        <dbReference type="ChEBI" id="CHEBI:77081"/>
    </reaction>
    <physiologicalReaction direction="left-to-right" evidence="3">
        <dbReference type="Rhea" id="RHEA:40268"/>
    </physiologicalReaction>
</comment>
<comment type="activity regulation">
    <text evidence="3">Enzyme activity enhanced by acetylation.</text>
</comment>
<comment type="pathway">
    <text evidence="4 5">Lipid metabolism; fatty acid beta-oxidation.</text>
</comment>
<comment type="subunit">
    <text evidence="2">Monomer.</text>
</comment>
<comment type="subcellular location">
    <subcellularLocation>
        <location evidence="9">Peroxisome</location>
    </subcellularLocation>
</comment>
<comment type="PTM">
    <text evidence="3">Acetylated, leading to enhanced enzyme activity. Acetylation is enhanced by up to 80% after treatment either with trichostin A (TCA) or with nicotinamide (NAM) with highest increase on Lys-344. Acetylation and enzyme activity increased by about 1.5% on addition of fatty acids (By similarity).</text>
</comment>
<comment type="disruption phenotype">
    <text evidence="5">Mutant mice fed a normal chow are phenotypically indistinguishable from wild-types. Mutant mice fed coconut oil rapidly lose weight and most of them die within 3 weeks. They overaccumulate dicarboxylic fatty acids, which activate all fatty acid oxidation pathways and lead to liver inflammation, fibrosis, and death.</text>
</comment>
<comment type="similarity">
    <text evidence="8">In the N-terminal section; belongs to the enoyl-CoA hydratase/isomerase family.</text>
</comment>
<comment type="similarity">
    <text evidence="8">In the C-terminal section; belongs to the 3-hydroxyacyl-CoA dehydrogenase family.</text>
</comment>
<feature type="chain" id="PRO_0000109248" description="Peroxisomal bifunctional enzyme">
    <location>
        <begin position="1"/>
        <end position="718"/>
    </location>
</feature>
<feature type="region of interest" description="Enoyl-CoA hydratase / isomerase">
    <location>
        <begin position="1"/>
        <end position="280"/>
    </location>
</feature>
<feature type="region of interest" description="3-hydroxyacyl-CoA dehydrogenase">
    <location>
        <begin position="281"/>
        <end position="567"/>
    </location>
</feature>
<feature type="short sequence motif" description="Microbody targeting signal" evidence="1">
    <location>
        <begin position="716"/>
        <end position="718"/>
    </location>
</feature>
<feature type="binding site" evidence="1">
    <location>
        <position position="99"/>
    </location>
    <ligand>
        <name>substrate</name>
    </ligand>
</feature>
<feature type="site" description="Important for catalytic activity" evidence="1">
    <location>
        <position position="102"/>
    </location>
</feature>
<feature type="site" description="Important for catalytic activity" evidence="1">
    <location>
        <position position="122"/>
    </location>
</feature>
<feature type="modified residue" description="N6-succinyllysine" evidence="13">
    <location>
        <position position="38"/>
    </location>
</feature>
<feature type="modified residue" description="N6-acetyllysine; alternate" evidence="3">
    <location>
        <position position="163"/>
    </location>
</feature>
<feature type="modified residue" description="N6-succinyllysine; alternate" evidence="13">
    <location>
        <position position="163"/>
    </location>
</feature>
<feature type="modified residue" description="N6-acetyllysine; alternate" evidence="12">
    <location>
        <position position="172"/>
    </location>
</feature>
<feature type="modified residue" description="N6-succinyllysine; alternate" evidence="13">
    <location>
        <position position="172"/>
    </location>
</feature>
<feature type="modified residue" description="N6-succinyllysine" evidence="13">
    <location>
        <position position="181"/>
    </location>
</feature>
<feature type="modified residue" description="N6-acetyllysine; alternate" evidence="12">
    <location>
        <position position="189"/>
    </location>
</feature>
<feature type="modified residue" description="N6-succinyllysine; alternate" evidence="13">
    <location>
        <position position="189"/>
    </location>
</feature>
<feature type="modified residue" description="N6-acetyllysine; alternate" evidence="12">
    <location>
        <position position="217"/>
    </location>
</feature>
<feature type="modified residue" description="N6-succinyllysine; alternate" evidence="13">
    <location>
        <position position="217"/>
    </location>
</feature>
<feature type="modified residue" description="N6-succinyllysine" evidence="13">
    <location>
        <position position="240"/>
    </location>
</feature>
<feature type="modified residue" description="N6-acetyllysine" evidence="12">
    <location>
        <position position="248"/>
    </location>
</feature>
<feature type="modified residue" description="N6-succinyllysine" evidence="13">
    <location>
        <position position="252"/>
    </location>
</feature>
<feature type="modified residue" description="N6-acetyllysine; alternate" evidence="12">
    <location>
        <position position="274"/>
    </location>
</feature>
<feature type="modified residue" description="N6-succinyllysine; alternate" evidence="13">
    <location>
        <position position="274"/>
    </location>
</feature>
<feature type="modified residue" description="N6-succinyllysine" evidence="13">
    <location>
        <position position="278"/>
    </location>
</feature>
<feature type="modified residue" description="N6-succinyllysine" evidence="13">
    <location>
        <position position="288"/>
    </location>
</feature>
<feature type="modified residue" description="N6-succinyllysine" evidence="13">
    <location>
        <position position="329"/>
    </location>
</feature>
<feature type="modified residue" description="N6-acetyllysine" evidence="12">
    <location>
        <position position="344"/>
    </location>
</feature>
<feature type="modified residue" description="N6-acetyllysine" evidence="12">
    <location>
        <position position="348"/>
    </location>
</feature>
<feature type="modified residue" description="N6-acetyllysine" evidence="12">
    <location>
        <position position="355"/>
    </location>
</feature>
<feature type="modified residue" description="N6-acetyllysine" evidence="12">
    <location>
        <position position="459"/>
    </location>
</feature>
<feature type="modified residue" description="N6-succinyllysine" evidence="13">
    <location>
        <position position="527"/>
    </location>
</feature>
<feature type="modified residue" description="Phosphothreonine" evidence="11">
    <location>
        <position position="543"/>
    </location>
</feature>
<feature type="modified residue" description="N6-succinyllysine" evidence="13">
    <location>
        <position position="572"/>
    </location>
</feature>
<feature type="modified residue" description="N6-acetyllysine; alternate" evidence="12">
    <location>
        <position position="579"/>
    </location>
</feature>
<feature type="modified residue" description="N6-succinyllysine; alternate" evidence="13">
    <location>
        <position position="579"/>
    </location>
</feature>
<feature type="modified residue" description="N6-acetyllysine; alternate" evidence="12">
    <location>
        <position position="586"/>
    </location>
</feature>
<feature type="modified residue" description="N6-succinyllysine; alternate" evidence="13">
    <location>
        <position position="586"/>
    </location>
</feature>
<feature type="modified residue" description="N6-acetyllysine; alternate" evidence="12">
    <location>
        <position position="705"/>
    </location>
</feature>
<feature type="modified residue" description="N6-succinyllysine; alternate" evidence="13">
    <location>
        <position position="705"/>
    </location>
</feature>
<feature type="modified residue" description="N6-succinyllysine" evidence="13">
    <location>
        <position position="717"/>
    </location>
</feature>
<feature type="sequence conflict" description="In Ref. 1; BAB23628." evidence="8" ref="1">
    <original>D</original>
    <variation>G</variation>
    <location>
        <position position="499"/>
    </location>
</feature>
<organism>
    <name type="scientific">Mus musculus</name>
    <name type="common">Mouse</name>
    <dbReference type="NCBI Taxonomy" id="10090"/>
    <lineage>
        <taxon>Eukaryota</taxon>
        <taxon>Metazoa</taxon>
        <taxon>Chordata</taxon>
        <taxon>Craniata</taxon>
        <taxon>Vertebrata</taxon>
        <taxon>Euteleostomi</taxon>
        <taxon>Mammalia</taxon>
        <taxon>Eutheria</taxon>
        <taxon>Euarchontoglires</taxon>
        <taxon>Glires</taxon>
        <taxon>Rodentia</taxon>
        <taxon>Myomorpha</taxon>
        <taxon>Muroidea</taxon>
        <taxon>Muridae</taxon>
        <taxon>Murinae</taxon>
        <taxon>Mus</taxon>
        <taxon>Mus</taxon>
    </lineage>
</organism>
<name>ECHP_MOUSE</name>
<gene>
    <name evidence="10" type="primary">Ehhadh</name>
    <name evidence="7" type="synonym">L-pbe</name>
</gene>
<protein>
    <recommendedName>
        <fullName evidence="8">Peroxisomal bifunctional enzyme</fullName>
        <shortName>PBE</shortName>
        <shortName>PBFE</shortName>
    </recommendedName>
    <alternativeName>
        <fullName evidence="7">L-peroxisomal bifunctional enzyme</fullName>
        <shortName evidence="7">L-PBE</shortName>
    </alternativeName>
    <alternativeName>
        <fullName>Multifunctional enzyme 1</fullName>
        <shortName>MFE1</shortName>
    </alternativeName>
    <alternativeName>
        <fullName evidence="6">Multifunctional protein 1</fullName>
        <shortName evidence="6">MFP-1</shortName>
    </alternativeName>
    <domain>
        <recommendedName>
            <fullName>Enoyl-CoA hydratase/3,2-trans-enoyl-CoA isomerase</fullName>
            <ecNumber evidence="4 5">4.2.1.17</ecNumber>
            <ecNumber>5.3.3.8</ecNumber>
        </recommendedName>
    </domain>
    <domain>
        <recommendedName>
            <fullName>3-hydroxyacyl-CoA dehydrogenase</fullName>
            <ecNumber evidence="4 5">1.1.1.35</ecNumber>
        </recommendedName>
    </domain>
</protein>
<accession>Q9DBM2</accession>
<accession>Q91W49</accession>
<evidence type="ECO:0000250" key="1"/>
<evidence type="ECO:0000250" key="2">
    <source>
        <dbReference type="UniProtKB" id="P07896"/>
    </source>
</evidence>
<evidence type="ECO:0000250" key="3">
    <source>
        <dbReference type="UniProtKB" id="Q08426"/>
    </source>
</evidence>
<evidence type="ECO:0000269" key="4">
    <source>
    </source>
</evidence>
<evidence type="ECO:0000269" key="5">
    <source>
    </source>
</evidence>
<evidence type="ECO:0000303" key="6">
    <source>
    </source>
</evidence>
<evidence type="ECO:0000303" key="7">
    <source>
    </source>
</evidence>
<evidence type="ECO:0000305" key="8"/>
<evidence type="ECO:0000305" key="9">
    <source>
    </source>
</evidence>
<evidence type="ECO:0000312" key="10">
    <source>
        <dbReference type="MGI" id="MGI:1277964"/>
    </source>
</evidence>
<evidence type="ECO:0007744" key="11">
    <source>
    </source>
</evidence>
<evidence type="ECO:0007744" key="12">
    <source>
    </source>
</evidence>
<evidence type="ECO:0007744" key="13">
    <source>
    </source>
</evidence>
<reference key="1">
    <citation type="journal article" date="2005" name="Science">
        <title>The transcriptional landscape of the mammalian genome.</title>
        <authorList>
            <person name="Carninci P."/>
            <person name="Kasukawa T."/>
            <person name="Katayama S."/>
            <person name="Gough J."/>
            <person name="Frith M.C."/>
            <person name="Maeda N."/>
            <person name="Oyama R."/>
            <person name="Ravasi T."/>
            <person name="Lenhard B."/>
            <person name="Wells C."/>
            <person name="Kodzius R."/>
            <person name="Shimokawa K."/>
            <person name="Bajic V.B."/>
            <person name="Brenner S.E."/>
            <person name="Batalov S."/>
            <person name="Forrest A.R."/>
            <person name="Zavolan M."/>
            <person name="Davis M.J."/>
            <person name="Wilming L.G."/>
            <person name="Aidinis V."/>
            <person name="Allen J.E."/>
            <person name="Ambesi-Impiombato A."/>
            <person name="Apweiler R."/>
            <person name="Aturaliya R.N."/>
            <person name="Bailey T.L."/>
            <person name="Bansal M."/>
            <person name="Baxter L."/>
            <person name="Beisel K.W."/>
            <person name="Bersano T."/>
            <person name="Bono H."/>
            <person name="Chalk A.M."/>
            <person name="Chiu K.P."/>
            <person name="Choudhary V."/>
            <person name="Christoffels A."/>
            <person name="Clutterbuck D.R."/>
            <person name="Crowe M.L."/>
            <person name="Dalla E."/>
            <person name="Dalrymple B.P."/>
            <person name="de Bono B."/>
            <person name="Della Gatta G."/>
            <person name="di Bernardo D."/>
            <person name="Down T."/>
            <person name="Engstrom P."/>
            <person name="Fagiolini M."/>
            <person name="Faulkner G."/>
            <person name="Fletcher C.F."/>
            <person name="Fukushima T."/>
            <person name="Furuno M."/>
            <person name="Futaki S."/>
            <person name="Gariboldi M."/>
            <person name="Georgii-Hemming P."/>
            <person name="Gingeras T.R."/>
            <person name="Gojobori T."/>
            <person name="Green R.E."/>
            <person name="Gustincich S."/>
            <person name="Harbers M."/>
            <person name="Hayashi Y."/>
            <person name="Hensch T.K."/>
            <person name="Hirokawa N."/>
            <person name="Hill D."/>
            <person name="Huminiecki L."/>
            <person name="Iacono M."/>
            <person name="Ikeo K."/>
            <person name="Iwama A."/>
            <person name="Ishikawa T."/>
            <person name="Jakt M."/>
            <person name="Kanapin A."/>
            <person name="Katoh M."/>
            <person name="Kawasawa Y."/>
            <person name="Kelso J."/>
            <person name="Kitamura H."/>
            <person name="Kitano H."/>
            <person name="Kollias G."/>
            <person name="Krishnan S.P."/>
            <person name="Kruger A."/>
            <person name="Kummerfeld S.K."/>
            <person name="Kurochkin I.V."/>
            <person name="Lareau L.F."/>
            <person name="Lazarevic D."/>
            <person name="Lipovich L."/>
            <person name="Liu J."/>
            <person name="Liuni S."/>
            <person name="McWilliam S."/>
            <person name="Madan Babu M."/>
            <person name="Madera M."/>
            <person name="Marchionni L."/>
            <person name="Matsuda H."/>
            <person name="Matsuzawa S."/>
            <person name="Miki H."/>
            <person name="Mignone F."/>
            <person name="Miyake S."/>
            <person name="Morris K."/>
            <person name="Mottagui-Tabar S."/>
            <person name="Mulder N."/>
            <person name="Nakano N."/>
            <person name="Nakauchi H."/>
            <person name="Ng P."/>
            <person name="Nilsson R."/>
            <person name="Nishiguchi S."/>
            <person name="Nishikawa S."/>
            <person name="Nori F."/>
            <person name="Ohara O."/>
            <person name="Okazaki Y."/>
            <person name="Orlando V."/>
            <person name="Pang K.C."/>
            <person name="Pavan W.J."/>
            <person name="Pavesi G."/>
            <person name="Pesole G."/>
            <person name="Petrovsky N."/>
            <person name="Piazza S."/>
            <person name="Reed J."/>
            <person name="Reid J.F."/>
            <person name="Ring B.Z."/>
            <person name="Ringwald M."/>
            <person name="Rost B."/>
            <person name="Ruan Y."/>
            <person name="Salzberg S.L."/>
            <person name="Sandelin A."/>
            <person name="Schneider C."/>
            <person name="Schoenbach C."/>
            <person name="Sekiguchi K."/>
            <person name="Semple C.A."/>
            <person name="Seno S."/>
            <person name="Sessa L."/>
            <person name="Sheng Y."/>
            <person name="Shibata Y."/>
            <person name="Shimada H."/>
            <person name="Shimada K."/>
            <person name="Silva D."/>
            <person name="Sinclair B."/>
            <person name="Sperling S."/>
            <person name="Stupka E."/>
            <person name="Sugiura K."/>
            <person name="Sultana R."/>
            <person name="Takenaka Y."/>
            <person name="Taki K."/>
            <person name="Tammoja K."/>
            <person name="Tan S.L."/>
            <person name="Tang S."/>
            <person name="Taylor M.S."/>
            <person name="Tegner J."/>
            <person name="Teichmann S.A."/>
            <person name="Ueda H.R."/>
            <person name="van Nimwegen E."/>
            <person name="Verardo R."/>
            <person name="Wei C.L."/>
            <person name="Yagi K."/>
            <person name="Yamanishi H."/>
            <person name="Zabarovsky E."/>
            <person name="Zhu S."/>
            <person name="Zimmer A."/>
            <person name="Hide W."/>
            <person name="Bult C."/>
            <person name="Grimmond S.M."/>
            <person name="Teasdale R.D."/>
            <person name="Liu E.T."/>
            <person name="Brusic V."/>
            <person name="Quackenbush J."/>
            <person name="Wahlestedt C."/>
            <person name="Mattick J.S."/>
            <person name="Hume D.A."/>
            <person name="Kai C."/>
            <person name="Sasaki D."/>
            <person name="Tomaru Y."/>
            <person name="Fukuda S."/>
            <person name="Kanamori-Katayama M."/>
            <person name="Suzuki M."/>
            <person name="Aoki J."/>
            <person name="Arakawa T."/>
            <person name="Iida J."/>
            <person name="Imamura K."/>
            <person name="Itoh M."/>
            <person name="Kato T."/>
            <person name="Kawaji H."/>
            <person name="Kawagashira N."/>
            <person name="Kawashima T."/>
            <person name="Kojima M."/>
            <person name="Kondo S."/>
            <person name="Konno H."/>
            <person name="Nakano K."/>
            <person name="Ninomiya N."/>
            <person name="Nishio T."/>
            <person name="Okada M."/>
            <person name="Plessy C."/>
            <person name="Shibata K."/>
            <person name="Shiraki T."/>
            <person name="Suzuki S."/>
            <person name="Tagami M."/>
            <person name="Waki K."/>
            <person name="Watahiki A."/>
            <person name="Okamura-Oho Y."/>
            <person name="Suzuki H."/>
            <person name="Kawai J."/>
            <person name="Hayashizaki Y."/>
        </authorList>
    </citation>
    <scope>NUCLEOTIDE SEQUENCE [LARGE SCALE MRNA]</scope>
    <source>
        <strain>C57BL/6J</strain>
        <tissue>Liver</tissue>
    </source>
</reference>
<reference key="2">
    <citation type="submission" date="2005-07" db="EMBL/GenBank/DDBJ databases">
        <authorList>
            <person name="Mural R.J."/>
            <person name="Adams M.D."/>
            <person name="Myers E.W."/>
            <person name="Smith H.O."/>
            <person name="Venter J.C."/>
        </authorList>
    </citation>
    <scope>NUCLEOTIDE SEQUENCE [LARGE SCALE GENOMIC DNA]</scope>
</reference>
<reference key="3">
    <citation type="journal article" date="2004" name="Genome Res.">
        <title>The status, quality, and expansion of the NIH full-length cDNA project: the Mammalian Gene Collection (MGC).</title>
        <authorList>
            <consortium name="The MGC Project Team"/>
        </authorList>
    </citation>
    <scope>NUCLEOTIDE SEQUENCE [LARGE SCALE MRNA]</scope>
    <source>
        <strain>FVB/N</strain>
        <tissue>Kidney</tissue>
    </source>
</reference>
<reference key="4">
    <citation type="journal article" date="2007" name="Biochem. Biophys. Res. Commun.">
        <title>Beta-oxidation in hepatocyte cultures from mice with peroxisomal gene knockouts.</title>
        <authorList>
            <person name="Dirkx R."/>
            <person name="Meyhi E."/>
            <person name="Asselberghs S."/>
            <person name="Reddy J."/>
            <person name="Baes M."/>
            <person name="Van Veldhoven P.P."/>
        </authorList>
    </citation>
    <scope>FUNCTION</scope>
    <scope>CATALYTIC ACTIVITY</scope>
</reference>
<reference key="5">
    <citation type="journal article" date="2010" name="Cell">
        <title>A tissue-specific atlas of mouse protein phosphorylation and expression.</title>
        <authorList>
            <person name="Huttlin E.L."/>
            <person name="Jedrychowski M.P."/>
            <person name="Elias J.E."/>
            <person name="Goswami T."/>
            <person name="Rad R."/>
            <person name="Beausoleil S.A."/>
            <person name="Villen J."/>
            <person name="Haas W."/>
            <person name="Sowa M.E."/>
            <person name="Gygi S.P."/>
        </authorList>
    </citation>
    <scope>PHOSPHORYLATION [LARGE SCALE ANALYSIS] AT THR-543</scope>
    <scope>IDENTIFICATION BY MASS SPECTROMETRY [LARGE SCALE ANALYSIS]</scope>
    <source>
        <tissue>Brown adipose tissue</tissue>
        <tissue>Heart</tissue>
        <tissue>Kidney</tissue>
        <tissue>Liver</tissue>
        <tissue>Lung</tissue>
        <tissue>Pancreas</tissue>
    </source>
</reference>
<reference key="6">
    <citation type="journal article" date="2013" name="Cell Rep.">
        <title>The peroxisomal enzyme L-PBE is required to prevent the dietary toxicity of medium-chain fatty acids.</title>
        <authorList>
            <person name="Ding J."/>
            <person name="Loizides-Mangold U."/>
            <person name="Rando G."/>
            <person name="Zoete V."/>
            <person name="Michielin O."/>
            <person name="Reddy J.K."/>
            <person name="Wahli W."/>
            <person name="Riezman H."/>
            <person name="Thorens B."/>
        </authorList>
    </citation>
    <scope>FUNCTION</scope>
    <scope>CATALYTIC ACTIVITY</scope>
    <scope>DISRUPTION PHENOTYPE</scope>
    <scope>SUBCELLULAR LOCATION</scope>
</reference>
<reference key="7">
    <citation type="journal article" date="2013" name="Mol. Cell">
        <title>SIRT5-mediated lysine desuccinylation impacts diverse metabolic pathways.</title>
        <authorList>
            <person name="Park J."/>
            <person name="Chen Y."/>
            <person name="Tishkoff D.X."/>
            <person name="Peng C."/>
            <person name="Tan M."/>
            <person name="Dai L."/>
            <person name="Xie Z."/>
            <person name="Zhang Y."/>
            <person name="Zwaans B.M."/>
            <person name="Skinner M.E."/>
            <person name="Lombard D.B."/>
            <person name="Zhao Y."/>
        </authorList>
    </citation>
    <scope>SUCCINYLATION [LARGE SCALE ANALYSIS] AT LYS-38; LYS-163; LYS-172; LYS-181; LYS-189; LYS-217; LYS-240; LYS-252; LYS-274; LYS-278; LYS-288; LYS-329; LYS-527; LYS-572; LYS-579; LYS-586; LYS-705 AND LYS-717</scope>
    <scope>IDENTIFICATION BY MASS SPECTROMETRY [LARGE SCALE ANALYSIS]</scope>
    <source>
        <tissue>Liver</tissue>
    </source>
</reference>
<reference key="8">
    <citation type="journal article" date="2013" name="Proc. Natl. Acad. Sci. U.S.A.">
        <title>Label-free quantitative proteomics of the lysine acetylome in mitochondria identifies substrates of SIRT3 in metabolic pathways.</title>
        <authorList>
            <person name="Rardin M.J."/>
            <person name="Newman J.C."/>
            <person name="Held J.M."/>
            <person name="Cusack M.P."/>
            <person name="Sorensen D.J."/>
            <person name="Li B."/>
            <person name="Schilling B."/>
            <person name="Mooney S.D."/>
            <person name="Kahn C.R."/>
            <person name="Verdin E."/>
            <person name="Gibson B.W."/>
        </authorList>
    </citation>
    <scope>ACETYLATION [LARGE SCALE ANALYSIS] AT LYS-172; LYS-189; LYS-217; LYS-248; LYS-274; LYS-344; LYS-348; LYS-355; LYS-459; LYS-579; LYS-586 AND LYS-705</scope>
    <scope>IDENTIFICATION BY MASS SPECTROMETRY [LARGE SCALE ANALYSIS]</scope>
    <source>
        <tissue>Liver</tissue>
    </source>
</reference>